<proteinExistence type="evidence at protein level"/>
<sequence length="221" mass="24827">MRTVYHQRLTELAGRLGEMCSLAGIAMKRATQALLEADIGAAEQVIRDHERIVAMRAQVEKEAFALLALQHPVAGELREIFSAVQIIADTERMGALAVHIAKITRREYPNQVLPEEVRNCFADMAKVAIALGDSARQVLVNRDPQEAAQLHDRDDAMDDLHRHLLSVLIDREWRHGVRVGVETALLGRFFERFADHAVEVGRRVIFMVTGVLPTEDEISTY</sequence>
<organism>
    <name type="scientific">Mycobacterium tuberculosis (strain ATCC 25618 / H37Rv)</name>
    <dbReference type="NCBI Taxonomy" id="83332"/>
    <lineage>
        <taxon>Bacteria</taxon>
        <taxon>Bacillati</taxon>
        <taxon>Actinomycetota</taxon>
        <taxon>Actinomycetes</taxon>
        <taxon>Mycobacteriales</taxon>
        <taxon>Mycobacteriaceae</taxon>
        <taxon>Mycobacterium</taxon>
        <taxon>Mycobacterium tuberculosis complex</taxon>
    </lineage>
</organism>
<comment type="function">
    <text evidence="1">Plays a role in the regulation of phosphate uptake. In this role, it may bind, possibly as a chaperone, to PhoR, PhoP or a PhoR-PhoP complex to promote dephosphorylation of phospho-PhoP, or inhibit formation of the PhoR-PhoP transitory complex (By similarity).</text>
</comment>
<comment type="subunit">
    <text evidence="1">Homodimer.</text>
</comment>
<comment type="subcellular location">
    <subcellularLocation>
        <location evidence="1">Cytoplasm</location>
    </subcellularLocation>
</comment>
<comment type="similarity">
    <text evidence="2">Belongs to the PhoU family.</text>
</comment>
<name>PHOU1_MYCTU</name>
<reference key="1">
    <citation type="journal article" date="1998" name="Nature">
        <title>Deciphering the biology of Mycobacterium tuberculosis from the complete genome sequence.</title>
        <authorList>
            <person name="Cole S.T."/>
            <person name="Brosch R."/>
            <person name="Parkhill J."/>
            <person name="Garnier T."/>
            <person name="Churcher C.M."/>
            <person name="Harris D.E."/>
            <person name="Gordon S.V."/>
            <person name="Eiglmeier K."/>
            <person name="Gas S."/>
            <person name="Barry C.E. III"/>
            <person name="Tekaia F."/>
            <person name="Badcock K."/>
            <person name="Basham D."/>
            <person name="Brown D."/>
            <person name="Chillingworth T."/>
            <person name="Connor R."/>
            <person name="Davies R.M."/>
            <person name="Devlin K."/>
            <person name="Feltwell T."/>
            <person name="Gentles S."/>
            <person name="Hamlin N."/>
            <person name="Holroyd S."/>
            <person name="Hornsby T."/>
            <person name="Jagels K."/>
            <person name="Krogh A."/>
            <person name="McLean J."/>
            <person name="Moule S."/>
            <person name="Murphy L.D."/>
            <person name="Oliver S."/>
            <person name="Osborne J."/>
            <person name="Quail M.A."/>
            <person name="Rajandream M.A."/>
            <person name="Rogers J."/>
            <person name="Rutter S."/>
            <person name="Seeger K."/>
            <person name="Skelton S."/>
            <person name="Squares S."/>
            <person name="Squares R."/>
            <person name="Sulston J.E."/>
            <person name="Taylor K."/>
            <person name="Whitehead S."/>
            <person name="Barrell B.G."/>
        </authorList>
    </citation>
    <scope>NUCLEOTIDE SEQUENCE [LARGE SCALE GENOMIC DNA]</scope>
    <source>
        <strain>ATCC 25618 / H37Rv</strain>
    </source>
</reference>
<reference key="2">
    <citation type="journal article" date="2011" name="Mol. Cell. Proteomics">
        <title>Proteogenomic analysis of Mycobacterium tuberculosis by high resolution mass spectrometry.</title>
        <authorList>
            <person name="Kelkar D.S."/>
            <person name="Kumar D."/>
            <person name="Kumar P."/>
            <person name="Balakrishnan L."/>
            <person name="Muthusamy B."/>
            <person name="Yadav A.K."/>
            <person name="Shrivastava P."/>
            <person name="Marimuthu A."/>
            <person name="Anand S."/>
            <person name="Sundaram H."/>
            <person name="Kingsbury R."/>
            <person name="Harsha H.C."/>
            <person name="Nair B."/>
            <person name="Prasad T.S."/>
            <person name="Chauhan D.S."/>
            <person name="Katoch K."/>
            <person name="Katoch V.M."/>
            <person name="Kumar P."/>
            <person name="Chaerkady R."/>
            <person name="Ramachandran S."/>
            <person name="Dash D."/>
            <person name="Pandey A."/>
        </authorList>
    </citation>
    <scope>IDENTIFICATION BY MASS SPECTROMETRY [LARGE SCALE ANALYSIS]</scope>
    <source>
        <strain>ATCC 25618 / H37Rv</strain>
    </source>
</reference>
<gene>
    <name type="primary">phoU1</name>
    <name type="synonym">phoY1</name>
    <name type="ordered locus">Rv3301c</name>
    <name type="ORF">MTCI418A.03c</name>
</gene>
<accession>P9WI97</accession>
<accession>L0TEX6</accession>
<accession>O07167</accession>
<accession>P65718</accession>
<feature type="chain" id="PRO_0000155171" description="Phosphate-specific transport system accessory protein PhoU homolog 1">
    <location>
        <begin position="1"/>
        <end position="221"/>
    </location>
</feature>
<protein>
    <recommendedName>
        <fullName>Phosphate-specific transport system accessory protein PhoU homolog 1</fullName>
        <shortName>Pst system accessory protein PhoU homolog 1</shortName>
    </recommendedName>
</protein>
<evidence type="ECO:0000250" key="1"/>
<evidence type="ECO:0000305" key="2"/>
<keyword id="KW-0963">Cytoplasm</keyword>
<keyword id="KW-0592">Phosphate transport</keyword>
<keyword id="KW-1185">Reference proteome</keyword>
<keyword id="KW-0813">Transport</keyword>
<dbReference type="EMBL" id="AL123456">
    <property type="protein sequence ID" value="CCP46120.1"/>
    <property type="molecule type" value="Genomic_DNA"/>
</dbReference>
<dbReference type="PIR" id="G70533">
    <property type="entry name" value="G70533"/>
</dbReference>
<dbReference type="RefSeq" id="NP_217818.1">
    <property type="nucleotide sequence ID" value="NC_000962.3"/>
</dbReference>
<dbReference type="SMR" id="P9WI97"/>
<dbReference type="FunCoup" id="P9WI97">
    <property type="interactions" value="8"/>
</dbReference>
<dbReference type="STRING" id="83332.Rv3301c"/>
<dbReference type="PaxDb" id="83332-Rv3301c"/>
<dbReference type="DNASU" id="887212"/>
<dbReference type="GeneID" id="887212"/>
<dbReference type="KEGG" id="mtu:Rv3301c"/>
<dbReference type="KEGG" id="mtv:RVBD_3301c"/>
<dbReference type="TubercuList" id="Rv3301c"/>
<dbReference type="eggNOG" id="COG0704">
    <property type="taxonomic scope" value="Bacteria"/>
</dbReference>
<dbReference type="InParanoid" id="P9WI97"/>
<dbReference type="OrthoDB" id="9814256at2"/>
<dbReference type="PhylomeDB" id="P9WI97"/>
<dbReference type="Proteomes" id="UP000001584">
    <property type="component" value="Chromosome"/>
</dbReference>
<dbReference type="GO" id="GO:0005829">
    <property type="term" value="C:cytosol"/>
    <property type="evidence" value="ECO:0007005"/>
    <property type="project" value="MTBBASE"/>
</dbReference>
<dbReference type="GO" id="GO:0005886">
    <property type="term" value="C:plasma membrane"/>
    <property type="evidence" value="ECO:0007005"/>
    <property type="project" value="MTBBASE"/>
</dbReference>
<dbReference type="GO" id="GO:0042803">
    <property type="term" value="F:protein homodimerization activity"/>
    <property type="evidence" value="ECO:0000250"/>
    <property type="project" value="UniProtKB"/>
</dbReference>
<dbReference type="GO" id="GO:0030643">
    <property type="term" value="P:intracellular phosphate ion homeostasis"/>
    <property type="evidence" value="ECO:0007669"/>
    <property type="project" value="InterPro"/>
</dbReference>
<dbReference type="GO" id="GO:0045936">
    <property type="term" value="P:negative regulation of phosphate metabolic process"/>
    <property type="evidence" value="ECO:0000250"/>
    <property type="project" value="UniProtKB"/>
</dbReference>
<dbReference type="GO" id="GO:2000186">
    <property type="term" value="P:negative regulation of phosphate transmembrane transport"/>
    <property type="evidence" value="ECO:0000250"/>
    <property type="project" value="UniProtKB"/>
</dbReference>
<dbReference type="GO" id="GO:0006817">
    <property type="term" value="P:phosphate ion transport"/>
    <property type="evidence" value="ECO:0007669"/>
    <property type="project" value="UniProtKB-KW"/>
</dbReference>
<dbReference type="FunFam" id="1.20.58.220:FF:000004">
    <property type="entry name" value="Phosphate-specific transport system accessory protein PhoU"/>
    <property type="match status" value="1"/>
</dbReference>
<dbReference type="Gene3D" id="1.20.58.220">
    <property type="entry name" value="Phosphate transport system protein phou homolog 2, domain 2"/>
    <property type="match status" value="1"/>
</dbReference>
<dbReference type="InterPro" id="IPR028366">
    <property type="entry name" value="P_transport_PhoU"/>
</dbReference>
<dbReference type="InterPro" id="IPR038078">
    <property type="entry name" value="PhoU-like_sf"/>
</dbReference>
<dbReference type="InterPro" id="IPR026022">
    <property type="entry name" value="PhoU_dom"/>
</dbReference>
<dbReference type="NCBIfam" id="TIGR02135">
    <property type="entry name" value="phoU_full"/>
    <property type="match status" value="1"/>
</dbReference>
<dbReference type="PANTHER" id="PTHR42930">
    <property type="entry name" value="PHOSPHATE-SPECIFIC TRANSPORT SYSTEM ACCESSORY PROTEIN PHOU"/>
    <property type="match status" value="1"/>
</dbReference>
<dbReference type="PANTHER" id="PTHR42930:SF3">
    <property type="entry name" value="PHOSPHATE-SPECIFIC TRANSPORT SYSTEM ACCESSORY PROTEIN PHOU"/>
    <property type="match status" value="1"/>
</dbReference>
<dbReference type="Pfam" id="PF01895">
    <property type="entry name" value="PhoU"/>
    <property type="match status" value="2"/>
</dbReference>
<dbReference type="PIRSF" id="PIRSF003107">
    <property type="entry name" value="PhoU"/>
    <property type="match status" value="1"/>
</dbReference>
<dbReference type="SUPFAM" id="SSF109755">
    <property type="entry name" value="PhoU-like"/>
    <property type="match status" value="1"/>
</dbReference>